<evidence type="ECO:0000250" key="1">
    <source>
        <dbReference type="UniProtKB" id="P02649"/>
    </source>
</evidence>
<evidence type="ECO:0000250" key="2">
    <source>
        <dbReference type="UniProtKB" id="P08226"/>
    </source>
</evidence>
<evidence type="ECO:0000255" key="3"/>
<evidence type="ECO:0000305" key="4"/>
<evidence type="ECO:0007744" key="5">
    <source>
    </source>
</evidence>
<dbReference type="EMBL" id="X04979">
    <property type="protein sequence ID" value="CAA28650.1"/>
    <property type="molecule type" value="Genomic_DNA"/>
</dbReference>
<dbReference type="EMBL" id="J02582">
    <property type="protein sequence ID" value="AAA40755.1"/>
    <property type="molecule type" value="Genomic_DNA"/>
</dbReference>
<dbReference type="EMBL" id="S76779">
    <property type="protein sequence ID" value="AAC60703.1"/>
    <property type="molecule type" value="mRNA"/>
</dbReference>
<dbReference type="EMBL" id="BC086581">
    <property type="protein sequence ID" value="AAH86581.1"/>
    <property type="molecule type" value="mRNA"/>
</dbReference>
<dbReference type="PIR" id="A26189">
    <property type="entry name" value="LPRTE"/>
</dbReference>
<dbReference type="RefSeq" id="NP_001257610.1">
    <property type="nucleotide sequence ID" value="NM_001270681.1"/>
</dbReference>
<dbReference type="RefSeq" id="NP_001257611.1">
    <property type="nucleotide sequence ID" value="NM_001270682.1"/>
</dbReference>
<dbReference type="RefSeq" id="NP_001257612.1">
    <property type="nucleotide sequence ID" value="NM_001270683.1"/>
</dbReference>
<dbReference type="RefSeq" id="NP_001257613.1">
    <property type="nucleotide sequence ID" value="NM_001270684.1"/>
</dbReference>
<dbReference type="RefSeq" id="NP_620183.2">
    <property type="nucleotide sequence ID" value="NM_138828.3"/>
</dbReference>
<dbReference type="SMR" id="P02650"/>
<dbReference type="BioGRID" id="247757">
    <property type="interactions" value="3"/>
</dbReference>
<dbReference type="FunCoup" id="P02650">
    <property type="interactions" value="535"/>
</dbReference>
<dbReference type="IntAct" id="P02650">
    <property type="interactions" value="4"/>
</dbReference>
<dbReference type="STRING" id="10116.ENSRNOP00000071702"/>
<dbReference type="iPTMnet" id="P02650"/>
<dbReference type="PhosphoSitePlus" id="P02650"/>
<dbReference type="PaxDb" id="10116-ENSRNOP00000050968"/>
<dbReference type="GeneID" id="25728"/>
<dbReference type="KEGG" id="rno:25728"/>
<dbReference type="UCSC" id="RGD:2138">
    <property type="organism name" value="rat"/>
</dbReference>
<dbReference type="AGR" id="RGD:2138"/>
<dbReference type="CTD" id="348"/>
<dbReference type="RGD" id="2138">
    <property type="gene designation" value="Apoe"/>
</dbReference>
<dbReference type="VEuPathDB" id="HostDB:ENSRNOG00000018454"/>
<dbReference type="eggNOG" id="ENOG502QVD6">
    <property type="taxonomic scope" value="Eukaryota"/>
</dbReference>
<dbReference type="InParanoid" id="P02650"/>
<dbReference type="OrthoDB" id="68171at9989"/>
<dbReference type="PhylomeDB" id="P02650"/>
<dbReference type="TreeFam" id="TF334458"/>
<dbReference type="Reactome" id="R-RNO-3000480">
    <property type="pathway name" value="Scavenging by Class A Receptors"/>
</dbReference>
<dbReference type="Reactome" id="R-RNO-381426">
    <property type="pathway name" value="Regulation of Insulin-like Growth Factor (IGF) transport and uptake by Insulin-like Growth Factor Binding Proteins (IGFBPs)"/>
</dbReference>
<dbReference type="Reactome" id="R-RNO-8957275">
    <property type="pathway name" value="Post-translational protein phosphorylation"/>
</dbReference>
<dbReference type="Reactome" id="R-RNO-8963888">
    <property type="pathway name" value="Chylomicron assembly"/>
</dbReference>
<dbReference type="Reactome" id="R-RNO-8963901">
    <property type="pathway name" value="Chylomicron remodeling"/>
</dbReference>
<dbReference type="Reactome" id="R-RNO-8964026">
    <property type="pathway name" value="Chylomicron clearance"/>
</dbReference>
<dbReference type="Reactome" id="R-RNO-8964058">
    <property type="pathway name" value="HDL remodeling"/>
</dbReference>
<dbReference type="Reactome" id="R-RNO-975634">
    <property type="pathway name" value="Retinoid metabolism and transport"/>
</dbReference>
<dbReference type="PRO" id="PR:P02650"/>
<dbReference type="Proteomes" id="UP000002494">
    <property type="component" value="Chromosome 1"/>
</dbReference>
<dbReference type="Bgee" id="ENSRNOG00000018454">
    <property type="expression patterns" value="Expressed in liver and 19 other cell types or tissues"/>
</dbReference>
<dbReference type="ExpressionAtlas" id="P02650">
    <property type="expression patterns" value="baseline and differential"/>
</dbReference>
<dbReference type="GO" id="GO:0009986">
    <property type="term" value="C:cell surface"/>
    <property type="evidence" value="ECO:0000314"/>
    <property type="project" value="RGD"/>
</dbReference>
<dbReference type="GO" id="GO:0042627">
    <property type="term" value="C:chylomicron"/>
    <property type="evidence" value="ECO:0000314"/>
    <property type="project" value="RGD"/>
</dbReference>
<dbReference type="GO" id="GO:0034360">
    <property type="term" value="C:chylomicron remnant"/>
    <property type="evidence" value="ECO:0000266"/>
    <property type="project" value="RGD"/>
</dbReference>
<dbReference type="GO" id="GO:0030425">
    <property type="term" value="C:dendrite"/>
    <property type="evidence" value="ECO:0000314"/>
    <property type="project" value="RGD"/>
</dbReference>
<dbReference type="GO" id="GO:0034365">
    <property type="term" value="C:discoidal high-density lipoprotein particle"/>
    <property type="evidence" value="ECO:0000314"/>
    <property type="project" value="RGD"/>
</dbReference>
<dbReference type="GO" id="GO:0005769">
    <property type="term" value="C:early endosome"/>
    <property type="evidence" value="ECO:0000314"/>
    <property type="project" value="RGD"/>
</dbReference>
<dbReference type="GO" id="GO:0005783">
    <property type="term" value="C:endoplasmic reticulum"/>
    <property type="evidence" value="ECO:0000266"/>
    <property type="project" value="RGD"/>
</dbReference>
<dbReference type="GO" id="GO:0005768">
    <property type="term" value="C:endosome"/>
    <property type="evidence" value="ECO:0000314"/>
    <property type="project" value="RGD"/>
</dbReference>
<dbReference type="GO" id="GO:0070062">
    <property type="term" value="C:extracellular exosome"/>
    <property type="evidence" value="ECO:0000250"/>
    <property type="project" value="UniProtKB"/>
</dbReference>
<dbReference type="GO" id="GO:0031012">
    <property type="term" value="C:extracellular matrix"/>
    <property type="evidence" value="ECO:0000250"/>
    <property type="project" value="UniProtKB"/>
</dbReference>
<dbReference type="GO" id="GO:0005576">
    <property type="term" value="C:extracellular region"/>
    <property type="evidence" value="ECO:0000266"/>
    <property type="project" value="RGD"/>
</dbReference>
<dbReference type="GO" id="GO:0005615">
    <property type="term" value="C:extracellular space"/>
    <property type="evidence" value="ECO:0000314"/>
    <property type="project" value="RGD"/>
</dbReference>
<dbReference type="GO" id="GO:1903561">
    <property type="term" value="C:extracellular vesicle"/>
    <property type="evidence" value="ECO:0000318"/>
    <property type="project" value="GO_Central"/>
</dbReference>
<dbReference type="GO" id="GO:0031232">
    <property type="term" value="C:extrinsic component of external side of plasma membrane"/>
    <property type="evidence" value="ECO:0000314"/>
    <property type="project" value="RGD"/>
</dbReference>
<dbReference type="GO" id="GO:0098978">
    <property type="term" value="C:glutamatergic synapse"/>
    <property type="evidence" value="ECO:0000266"/>
    <property type="project" value="RGD"/>
</dbReference>
<dbReference type="GO" id="GO:0005794">
    <property type="term" value="C:Golgi apparatus"/>
    <property type="evidence" value="ECO:0000266"/>
    <property type="project" value="RGD"/>
</dbReference>
<dbReference type="GO" id="GO:0034364">
    <property type="term" value="C:high-density lipoprotein particle"/>
    <property type="evidence" value="ECO:0000314"/>
    <property type="project" value="ARUK-UCL"/>
</dbReference>
<dbReference type="GO" id="GO:0034363">
    <property type="term" value="C:intermediate-density lipoprotein particle"/>
    <property type="evidence" value="ECO:0000314"/>
    <property type="project" value="ARUK-UCL"/>
</dbReference>
<dbReference type="GO" id="GO:0005770">
    <property type="term" value="C:late endosome"/>
    <property type="evidence" value="ECO:0000314"/>
    <property type="project" value="RGD"/>
</dbReference>
<dbReference type="GO" id="GO:1990777">
    <property type="term" value="C:lipoprotein particle"/>
    <property type="evidence" value="ECO:0000266"/>
    <property type="project" value="RGD"/>
</dbReference>
<dbReference type="GO" id="GO:0034362">
    <property type="term" value="C:low-density lipoprotein particle"/>
    <property type="evidence" value="ECO:0000314"/>
    <property type="project" value="ARUK-UCL"/>
</dbReference>
<dbReference type="GO" id="GO:0042470">
    <property type="term" value="C:melanosome"/>
    <property type="evidence" value="ECO:0000266"/>
    <property type="project" value="RGD"/>
</dbReference>
<dbReference type="GO" id="GO:0005874">
    <property type="term" value="C:microtubule"/>
    <property type="evidence" value="ECO:0000314"/>
    <property type="project" value="RGD"/>
</dbReference>
<dbReference type="GO" id="GO:0097487">
    <property type="term" value="C:multivesicular body, internal vesicle"/>
    <property type="evidence" value="ECO:0000250"/>
    <property type="project" value="UniProtKB"/>
</dbReference>
<dbReference type="GO" id="GO:0043025">
    <property type="term" value="C:neuronal cell body"/>
    <property type="evidence" value="ECO:0000314"/>
    <property type="project" value="RGD"/>
</dbReference>
<dbReference type="GO" id="GO:0005635">
    <property type="term" value="C:nuclear envelope"/>
    <property type="evidence" value="ECO:0000314"/>
    <property type="project" value="RGD"/>
</dbReference>
<dbReference type="GO" id="GO:0043083">
    <property type="term" value="C:synaptic cleft"/>
    <property type="evidence" value="ECO:0000266"/>
    <property type="project" value="RGD"/>
</dbReference>
<dbReference type="GO" id="GO:0034361">
    <property type="term" value="C:very-low-density lipoprotein particle"/>
    <property type="evidence" value="ECO:0000314"/>
    <property type="project" value="ARUK-UCL"/>
</dbReference>
<dbReference type="GO" id="GO:0001540">
    <property type="term" value="F:amyloid-beta binding"/>
    <property type="evidence" value="ECO:0000314"/>
    <property type="project" value="RGD"/>
</dbReference>
<dbReference type="GO" id="GO:0016209">
    <property type="term" value="F:antioxidant activity"/>
    <property type="evidence" value="ECO:0000266"/>
    <property type="project" value="RGD"/>
</dbReference>
<dbReference type="GO" id="GO:0120020">
    <property type="term" value="F:cholesterol transfer activity"/>
    <property type="evidence" value="ECO:0000266"/>
    <property type="project" value="RGD"/>
</dbReference>
<dbReference type="GO" id="GO:0019899">
    <property type="term" value="F:enzyme binding"/>
    <property type="evidence" value="ECO:0000266"/>
    <property type="project" value="RGD"/>
</dbReference>
<dbReference type="GO" id="GO:0043395">
    <property type="term" value="F:heparan sulfate proteoglycan binding"/>
    <property type="evidence" value="ECO:0000250"/>
    <property type="project" value="UniProtKB"/>
</dbReference>
<dbReference type="GO" id="GO:0008201">
    <property type="term" value="F:heparin binding"/>
    <property type="evidence" value="ECO:0000250"/>
    <property type="project" value="UniProtKB"/>
</dbReference>
<dbReference type="GO" id="GO:0046848">
    <property type="term" value="F:hydroxyapatite binding"/>
    <property type="evidence" value="ECO:0000314"/>
    <property type="project" value="RGD"/>
</dbReference>
<dbReference type="GO" id="GO:0042802">
    <property type="term" value="F:identical protein binding"/>
    <property type="evidence" value="ECO:0000250"/>
    <property type="project" value="UniProtKB"/>
</dbReference>
<dbReference type="GO" id="GO:0008289">
    <property type="term" value="F:lipid binding"/>
    <property type="evidence" value="ECO:0000266"/>
    <property type="project" value="RGD"/>
</dbReference>
<dbReference type="GO" id="GO:0005319">
    <property type="term" value="F:lipid transporter activity"/>
    <property type="evidence" value="ECO:0000314"/>
    <property type="project" value="RGD"/>
</dbReference>
<dbReference type="GO" id="GO:0071813">
    <property type="term" value="F:lipoprotein particle binding"/>
    <property type="evidence" value="ECO:0000266"/>
    <property type="project" value="RGD"/>
</dbReference>
<dbReference type="GO" id="GO:0050750">
    <property type="term" value="F:low-density lipoprotein particle receptor binding"/>
    <property type="evidence" value="ECO:0000250"/>
    <property type="project" value="UniProtKB"/>
</dbReference>
<dbReference type="GO" id="GO:0046911">
    <property type="term" value="F:metal chelating activity"/>
    <property type="evidence" value="ECO:0000266"/>
    <property type="project" value="RGD"/>
</dbReference>
<dbReference type="GO" id="GO:0060228">
    <property type="term" value="F:phosphatidylcholine-sterol O-acyltransferase activator activity"/>
    <property type="evidence" value="ECO:0000266"/>
    <property type="project" value="RGD"/>
</dbReference>
<dbReference type="GO" id="GO:0005543">
    <property type="term" value="F:phospholipid binding"/>
    <property type="evidence" value="ECO:0000314"/>
    <property type="project" value="RGD"/>
</dbReference>
<dbReference type="GO" id="GO:0046983">
    <property type="term" value="F:protein dimerization activity"/>
    <property type="evidence" value="ECO:0000266"/>
    <property type="project" value="RGD"/>
</dbReference>
<dbReference type="GO" id="GO:0042803">
    <property type="term" value="F:protein homodimerization activity"/>
    <property type="evidence" value="ECO:0000266"/>
    <property type="project" value="RGD"/>
</dbReference>
<dbReference type="GO" id="GO:0044877">
    <property type="term" value="F:protein-containing complex binding"/>
    <property type="evidence" value="ECO:0000266"/>
    <property type="project" value="RGD"/>
</dbReference>
<dbReference type="GO" id="GO:0048018">
    <property type="term" value="F:receptor ligand activity"/>
    <property type="evidence" value="ECO:0000266"/>
    <property type="project" value="RGD"/>
</dbReference>
<dbReference type="GO" id="GO:0005102">
    <property type="term" value="F:signaling receptor binding"/>
    <property type="evidence" value="ECO:0000353"/>
    <property type="project" value="UniProtKB"/>
</dbReference>
<dbReference type="GO" id="GO:0048156">
    <property type="term" value="F:tau protein binding"/>
    <property type="evidence" value="ECO:0000266"/>
    <property type="project" value="RGD"/>
</dbReference>
<dbReference type="GO" id="GO:0070326">
    <property type="term" value="F:very-low-density lipoprotein particle receptor binding"/>
    <property type="evidence" value="ECO:0000266"/>
    <property type="project" value="RGD"/>
</dbReference>
<dbReference type="GO" id="GO:0055090">
    <property type="term" value="P:acylglycerol homeostasis"/>
    <property type="evidence" value="ECO:0000318"/>
    <property type="project" value="GO_Central"/>
</dbReference>
<dbReference type="GO" id="GO:0097113">
    <property type="term" value="P:AMPA glutamate receptor clustering"/>
    <property type="evidence" value="ECO:0000266"/>
    <property type="project" value="RGD"/>
</dbReference>
<dbReference type="GO" id="GO:0042982">
    <property type="term" value="P:amyloid precursor protein metabolic process"/>
    <property type="evidence" value="ECO:0000266"/>
    <property type="project" value="RGD"/>
</dbReference>
<dbReference type="GO" id="GO:0048844">
    <property type="term" value="P:artery morphogenesis"/>
    <property type="evidence" value="ECO:0000266"/>
    <property type="project" value="RGD"/>
</dbReference>
<dbReference type="GO" id="GO:0071397">
    <property type="term" value="P:cellular response to cholesterol"/>
    <property type="evidence" value="ECO:0000270"/>
    <property type="project" value="RGD"/>
</dbReference>
<dbReference type="GO" id="GO:0071361">
    <property type="term" value="P:cellular response to ethanol"/>
    <property type="evidence" value="ECO:0000270"/>
    <property type="project" value="RGD"/>
</dbReference>
<dbReference type="GO" id="GO:0071363">
    <property type="term" value="P:cellular response to growth factor stimulus"/>
    <property type="evidence" value="ECO:0000270"/>
    <property type="project" value="RGD"/>
</dbReference>
<dbReference type="GO" id="GO:0071347">
    <property type="term" value="P:cellular response to interleukin-1"/>
    <property type="evidence" value="ECO:0000270"/>
    <property type="project" value="RGD"/>
</dbReference>
<dbReference type="GO" id="GO:0071402">
    <property type="term" value="P:cellular response to lipoprotein particle stimulus"/>
    <property type="evidence" value="ECO:0000266"/>
    <property type="project" value="RGD"/>
</dbReference>
<dbReference type="GO" id="GO:0006707">
    <property type="term" value="P:cholesterol catabolic process"/>
    <property type="evidence" value="ECO:0000266"/>
    <property type="project" value="RGD"/>
</dbReference>
<dbReference type="GO" id="GO:0033344">
    <property type="term" value="P:cholesterol efflux"/>
    <property type="evidence" value="ECO:0000250"/>
    <property type="project" value="UniProtKB"/>
</dbReference>
<dbReference type="GO" id="GO:0042632">
    <property type="term" value="P:cholesterol homeostasis"/>
    <property type="evidence" value="ECO:0000266"/>
    <property type="project" value="RGD"/>
</dbReference>
<dbReference type="GO" id="GO:0008203">
    <property type="term" value="P:cholesterol metabolic process"/>
    <property type="evidence" value="ECO:0000266"/>
    <property type="project" value="RGD"/>
</dbReference>
<dbReference type="GO" id="GO:0034382">
    <property type="term" value="P:chylomicron remnant clearance"/>
    <property type="evidence" value="ECO:0000250"/>
    <property type="project" value="UniProtKB"/>
</dbReference>
<dbReference type="GO" id="GO:0072359">
    <property type="term" value="P:circulatory system development"/>
    <property type="evidence" value="ECO:0000266"/>
    <property type="project" value="RGD"/>
</dbReference>
<dbReference type="GO" id="GO:0055089">
    <property type="term" value="P:fatty acid homeostasis"/>
    <property type="evidence" value="ECO:0000266"/>
    <property type="project" value="RGD"/>
</dbReference>
<dbReference type="GO" id="GO:0007186">
    <property type="term" value="P:G protein-coupled receptor signaling pathway"/>
    <property type="evidence" value="ECO:0000266"/>
    <property type="project" value="RGD"/>
</dbReference>
<dbReference type="GO" id="GO:0010467">
    <property type="term" value="P:gene expression"/>
    <property type="evidence" value="ECO:0000266"/>
    <property type="project" value="RGD"/>
</dbReference>
<dbReference type="GO" id="GO:0034380">
    <property type="term" value="P:high-density lipoprotein particle assembly"/>
    <property type="evidence" value="ECO:0000250"/>
    <property type="project" value="UniProtKB"/>
</dbReference>
<dbReference type="GO" id="GO:0034384">
    <property type="term" value="P:high-density lipoprotein particle clearance"/>
    <property type="evidence" value="ECO:0000266"/>
    <property type="project" value="RGD"/>
</dbReference>
<dbReference type="GO" id="GO:0034375">
    <property type="term" value="P:high-density lipoprotein particle remodeling"/>
    <property type="evidence" value="ECO:0000266"/>
    <property type="project" value="RGD"/>
</dbReference>
<dbReference type="GO" id="GO:0071831">
    <property type="term" value="P:intermediate-density lipoprotein particle clearance"/>
    <property type="evidence" value="ECO:0000250"/>
    <property type="project" value="UniProtKB"/>
</dbReference>
<dbReference type="GO" id="GO:0006874">
    <property type="term" value="P:intracellular calcium ion homeostasis"/>
    <property type="evidence" value="ECO:0000266"/>
    <property type="project" value="RGD"/>
</dbReference>
<dbReference type="GO" id="GO:0055088">
    <property type="term" value="P:lipid homeostasis"/>
    <property type="evidence" value="ECO:0000266"/>
    <property type="project" value="RGD"/>
</dbReference>
<dbReference type="GO" id="GO:0006629">
    <property type="term" value="P:lipid metabolic process"/>
    <property type="evidence" value="ECO:0000266"/>
    <property type="project" value="RGD"/>
</dbReference>
<dbReference type="GO" id="GO:0006869">
    <property type="term" value="P:lipid transport"/>
    <property type="evidence" value="ECO:0000314"/>
    <property type="project" value="RGD"/>
</dbReference>
<dbReference type="GO" id="GO:0010877">
    <property type="term" value="P:lipid transport involved in lipid storage"/>
    <property type="evidence" value="ECO:0000266"/>
    <property type="project" value="RGD"/>
</dbReference>
<dbReference type="GO" id="GO:0042158">
    <property type="term" value="P:lipoprotein biosynthetic process"/>
    <property type="evidence" value="ECO:0000250"/>
    <property type="project" value="UniProtKB"/>
</dbReference>
<dbReference type="GO" id="GO:0042159">
    <property type="term" value="P:lipoprotein catabolic process"/>
    <property type="evidence" value="ECO:0000266"/>
    <property type="project" value="RGD"/>
</dbReference>
<dbReference type="GO" id="GO:0042157">
    <property type="term" value="P:lipoprotein metabolic process"/>
    <property type="evidence" value="ECO:0000314"/>
    <property type="project" value="RGD"/>
</dbReference>
<dbReference type="GO" id="GO:0035641">
    <property type="term" value="P:locomotory exploration behavior"/>
    <property type="evidence" value="ECO:0000266"/>
    <property type="project" value="RGD"/>
</dbReference>
<dbReference type="GO" id="GO:0015909">
    <property type="term" value="P:long-chain fatty acid transport"/>
    <property type="evidence" value="ECO:0000266"/>
    <property type="project" value="RGD"/>
</dbReference>
<dbReference type="GO" id="GO:0007616">
    <property type="term" value="P:long-term memory"/>
    <property type="evidence" value="ECO:0000266"/>
    <property type="project" value="RGD"/>
</dbReference>
<dbReference type="GO" id="GO:0034374">
    <property type="term" value="P:low-density lipoprotein particle remodeling"/>
    <property type="evidence" value="ECO:0000266"/>
    <property type="project" value="RGD"/>
</dbReference>
<dbReference type="GO" id="GO:0051651">
    <property type="term" value="P:maintenance of location in cell"/>
    <property type="evidence" value="ECO:0000266"/>
    <property type="project" value="RGD"/>
</dbReference>
<dbReference type="GO" id="GO:0032438">
    <property type="term" value="P:melanosome organization"/>
    <property type="evidence" value="ECO:0000250"/>
    <property type="project" value="UniProtKB"/>
</dbReference>
<dbReference type="GO" id="GO:1905907">
    <property type="term" value="P:negative regulation of amyloid fibril formation"/>
    <property type="evidence" value="ECO:0000250"/>
    <property type="project" value="UniProtKB"/>
</dbReference>
<dbReference type="GO" id="GO:1902430">
    <property type="term" value="P:negative regulation of amyloid-beta formation"/>
    <property type="evidence" value="ECO:0000266"/>
    <property type="project" value="RGD"/>
</dbReference>
<dbReference type="GO" id="GO:0030195">
    <property type="term" value="P:negative regulation of blood coagulation"/>
    <property type="evidence" value="ECO:0000266"/>
    <property type="project" value="RGD"/>
</dbReference>
<dbReference type="GO" id="GO:0043537">
    <property type="term" value="P:negative regulation of blood vessel endothelial cell migration"/>
    <property type="evidence" value="ECO:0000266"/>
    <property type="project" value="RGD"/>
</dbReference>
<dbReference type="GO" id="GO:0090090">
    <property type="term" value="P:negative regulation of canonical Wnt signaling pathway"/>
    <property type="evidence" value="ECO:0000266"/>
    <property type="project" value="RGD"/>
</dbReference>
<dbReference type="GO" id="GO:0045541">
    <property type="term" value="P:negative regulation of cholesterol biosynthetic process"/>
    <property type="evidence" value="ECO:0000314"/>
    <property type="project" value="RGD"/>
</dbReference>
<dbReference type="GO" id="GO:0010596">
    <property type="term" value="P:negative regulation of endothelial cell migration"/>
    <property type="evidence" value="ECO:0000266"/>
    <property type="project" value="RGD"/>
</dbReference>
<dbReference type="GO" id="GO:0001937">
    <property type="term" value="P:negative regulation of endothelial cell proliferation"/>
    <property type="evidence" value="ECO:0000266"/>
    <property type="project" value="RGD"/>
</dbReference>
<dbReference type="GO" id="GO:0010629">
    <property type="term" value="P:negative regulation of gene expression"/>
    <property type="evidence" value="ECO:0000266"/>
    <property type="project" value="RGD"/>
</dbReference>
<dbReference type="GO" id="GO:0050728">
    <property type="term" value="P:negative regulation of inflammatory response"/>
    <property type="evidence" value="ECO:0000266"/>
    <property type="project" value="RGD"/>
</dbReference>
<dbReference type="GO" id="GO:1900272">
    <property type="term" value="P:negative regulation of long-term synaptic potentiation"/>
    <property type="evidence" value="ECO:0000266"/>
    <property type="project" value="RGD"/>
</dbReference>
<dbReference type="GO" id="GO:0010977">
    <property type="term" value="P:negative regulation of neuron projection development"/>
    <property type="evidence" value="ECO:0000266"/>
    <property type="project" value="RGD"/>
</dbReference>
<dbReference type="GO" id="GO:0010544">
    <property type="term" value="P:negative regulation of platelet activation"/>
    <property type="evidence" value="ECO:0000266"/>
    <property type="project" value="RGD"/>
</dbReference>
<dbReference type="GO" id="GO:0051248">
    <property type="term" value="P:negative regulation of protein metabolic process"/>
    <property type="evidence" value="ECO:0000266"/>
    <property type="project" value="RGD"/>
</dbReference>
<dbReference type="GO" id="GO:0050709">
    <property type="term" value="P:negative regulation of protein secretion"/>
    <property type="evidence" value="ECO:0000266"/>
    <property type="project" value="RGD"/>
</dbReference>
<dbReference type="GO" id="GO:0048662">
    <property type="term" value="P:negative regulation of smooth muscle cell proliferation"/>
    <property type="evidence" value="ECO:0000266"/>
    <property type="project" value="RGD"/>
</dbReference>
<dbReference type="GO" id="GO:0090209">
    <property type="term" value="P:negative regulation of triglyceride metabolic process"/>
    <property type="evidence" value="ECO:0000266"/>
    <property type="project" value="RGD"/>
</dbReference>
<dbReference type="GO" id="GO:0031175">
    <property type="term" value="P:neuron projection development"/>
    <property type="evidence" value="ECO:0000266"/>
    <property type="project" value="RGD"/>
</dbReference>
<dbReference type="GO" id="GO:0031102">
    <property type="term" value="P:neuron projection regeneration"/>
    <property type="evidence" value="ECO:0000304"/>
    <property type="project" value="RGD"/>
</dbReference>
<dbReference type="GO" id="GO:0038060">
    <property type="term" value="P:nitric oxide-cGMP-mediated signaling"/>
    <property type="evidence" value="ECO:0000266"/>
    <property type="project" value="RGD"/>
</dbReference>
<dbReference type="GO" id="GO:0097114">
    <property type="term" value="P:NMDA glutamate receptor clustering"/>
    <property type="evidence" value="ECO:0000266"/>
    <property type="project" value="RGD"/>
</dbReference>
<dbReference type="GO" id="GO:0048709">
    <property type="term" value="P:oligodendrocyte differentiation"/>
    <property type="evidence" value="ECO:0000270"/>
    <property type="project" value="RGD"/>
</dbReference>
<dbReference type="GO" id="GO:0014012">
    <property type="term" value="P:peripheral nervous system axon regeneration"/>
    <property type="evidence" value="ECO:0000270"/>
    <property type="project" value="RGD"/>
</dbReference>
<dbReference type="GO" id="GO:0033700">
    <property type="term" value="P:phospholipid efflux"/>
    <property type="evidence" value="ECO:0000266"/>
    <property type="project" value="RGD"/>
</dbReference>
<dbReference type="GO" id="GO:0044794">
    <property type="term" value="P:positive regulation by host of viral process"/>
    <property type="evidence" value="ECO:0000266"/>
    <property type="project" value="RGD"/>
</dbReference>
<dbReference type="GO" id="GO:1900223">
    <property type="term" value="P:positive regulation of amyloid-beta clearance"/>
    <property type="evidence" value="ECO:0000250"/>
    <property type="project" value="UniProtKB"/>
</dbReference>
<dbReference type="GO" id="GO:0045773">
    <property type="term" value="P:positive regulation of axon extension"/>
    <property type="evidence" value="ECO:0000314"/>
    <property type="project" value="RGD"/>
</dbReference>
<dbReference type="GO" id="GO:0010875">
    <property type="term" value="P:positive regulation of cholesterol efflux"/>
    <property type="evidence" value="ECO:0000266"/>
    <property type="project" value="RGD"/>
</dbReference>
<dbReference type="GO" id="GO:0090205">
    <property type="term" value="P:positive regulation of cholesterol metabolic process"/>
    <property type="evidence" value="ECO:0000266"/>
    <property type="project" value="RGD"/>
</dbReference>
<dbReference type="GO" id="GO:0060999">
    <property type="term" value="P:positive regulation of dendritic spine development"/>
    <property type="evidence" value="ECO:0000266"/>
    <property type="project" value="RGD"/>
</dbReference>
<dbReference type="GO" id="GO:1902952">
    <property type="term" value="P:positive regulation of dendritic spine maintenance"/>
    <property type="evidence" value="ECO:0000266"/>
    <property type="project" value="RGD"/>
</dbReference>
<dbReference type="GO" id="GO:0045893">
    <property type="term" value="P:positive regulation of DNA-templated transcription"/>
    <property type="evidence" value="ECO:0000266"/>
    <property type="project" value="RGD"/>
</dbReference>
<dbReference type="GO" id="GO:0045807">
    <property type="term" value="P:positive regulation of endocytosis"/>
    <property type="evidence" value="ECO:0000266"/>
    <property type="project" value="RGD"/>
</dbReference>
<dbReference type="GO" id="GO:0070374">
    <property type="term" value="P:positive regulation of ERK1 and ERK2 cascade"/>
    <property type="evidence" value="ECO:0000266"/>
    <property type="project" value="RGD"/>
</dbReference>
<dbReference type="GO" id="GO:0046889">
    <property type="term" value="P:positive regulation of lipid biosynthetic process"/>
    <property type="evidence" value="ECO:0000266"/>
    <property type="project" value="RGD"/>
</dbReference>
<dbReference type="GO" id="GO:1903002">
    <property type="term" value="P:positive regulation of lipid transport across blood-brain barrier"/>
    <property type="evidence" value="ECO:0000266"/>
    <property type="project" value="RGD"/>
</dbReference>
<dbReference type="GO" id="GO:0140077">
    <property type="term" value="P:positive regulation of lipoprotein transport"/>
    <property type="evidence" value="ECO:0000266"/>
    <property type="project" value="RGD"/>
</dbReference>
<dbReference type="GO" id="GO:0032805">
    <property type="term" value="P:positive regulation of low-density lipoprotein particle receptor catabolic process"/>
    <property type="evidence" value="ECO:0000266"/>
    <property type="project" value="RGD"/>
</dbReference>
<dbReference type="GO" id="GO:0051044">
    <property type="term" value="P:positive regulation of membrane protein ectodomain proteolysis"/>
    <property type="evidence" value="ECO:0000266"/>
    <property type="project" value="RGD"/>
</dbReference>
<dbReference type="GO" id="GO:0010976">
    <property type="term" value="P:positive regulation of neuron projection development"/>
    <property type="evidence" value="ECO:0000266"/>
    <property type="project" value="RGD"/>
</dbReference>
<dbReference type="GO" id="GO:0045429">
    <property type="term" value="P:positive regulation of nitric oxide biosynthetic process"/>
    <property type="evidence" value="ECO:0000266"/>
    <property type="project" value="RGD"/>
</dbReference>
<dbReference type="GO" id="GO:1902995">
    <property type="term" value="P:positive regulation of phospholipid efflux"/>
    <property type="evidence" value="ECO:0000266"/>
    <property type="project" value="RGD"/>
</dbReference>
<dbReference type="GO" id="GO:0017038">
    <property type="term" value="P:protein import"/>
    <property type="evidence" value="ECO:0000266"/>
    <property type="project" value="RGD"/>
</dbReference>
<dbReference type="GO" id="GO:0006898">
    <property type="term" value="P:receptor-mediated endocytosis"/>
    <property type="evidence" value="ECO:0000266"/>
    <property type="project" value="RGD"/>
</dbReference>
<dbReference type="GO" id="GO:1905906">
    <property type="term" value="P:regulation of amyloid fibril formation"/>
    <property type="evidence" value="ECO:0000266"/>
    <property type="project" value="RGD"/>
</dbReference>
<dbReference type="GO" id="GO:1902991">
    <property type="term" value="P:regulation of amyloid precursor protein catabolic process"/>
    <property type="evidence" value="ECO:0000266"/>
    <property type="project" value="RGD"/>
</dbReference>
<dbReference type="GO" id="GO:1900221">
    <property type="term" value="P:regulation of amyloid-beta clearance"/>
    <property type="evidence" value="ECO:0000266"/>
    <property type="project" value="RGD"/>
</dbReference>
<dbReference type="GO" id="GO:0042981">
    <property type="term" value="P:regulation of apoptotic process"/>
    <property type="evidence" value="ECO:0000266"/>
    <property type="project" value="RGD"/>
</dbReference>
<dbReference type="GO" id="GO:2000822">
    <property type="term" value="P:regulation of behavioral fear response"/>
    <property type="evidence" value="ECO:0000266"/>
    <property type="project" value="RGD"/>
</dbReference>
<dbReference type="GO" id="GO:0032489">
    <property type="term" value="P:regulation of Cdc42 protein signal transduction"/>
    <property type="evidence" value="ECO:0000266"/>
    <property type="project" value="RGD"/>
</dbReference>
<dbReference type="GO" id="GO:1905890">
    <property type="term" value="P:regulation of cellular response to very-low-density lipoprotein particle stimulus"/>
    <property type="evidence" value="ECO:0000266"/>
    <property type="project" value="RGD"/>
</dbReference>
<dbReference type="GO" id="GO:0090181">
    <property type="term" value="P:regulation of cholesterol metabolic process"/>
    <property type="evidence" value="ECO:0000266"/>
    <property type="project" value="RGD"/>
</dbReference>
<dbReference type="GO" id="GO:0010468">
    <property type="term" value="P:regulation of gene expression"/>
    <property type="evidence" value="ECO:0000266"/>
    <property type="project" value="RGD"/>
</dbReference>
<dbReference type="GO" id="GO:0045088">
    <property type="term" value="P:regulation of innate immune response"/>
    <property type="evidence" value="ECO:0000266"/>
    <property type="project" value="RGD"/>
</dbReference>
<dbReference type="GO" id="GO:0097006">
    <property type="term" value="P:regulation of plasma lipoprotein particle levels"/>
    <property type="evidence" value="ECO:0000266"/>
    <property type="project" value="RGD"/>
</dbReference>
<dbReference type="GO" id="GO:0061136">
    <property type="term" value="P:regulation of proteasomal protein catabolic process"/>
    <property type="evidence" value="ECO:0000266"/>
    <property type="project" value="RGD"/>
</dbReference>
<dbReference type="GO" id="GO:0051246">
    <property type="term" value="P:regulation of protein metabolic process"/>
    <property type="evidence" value="ECO:0000266"/>
    <property type="project" value="RGD"/>
</dbReference>
<dbReference type="GO" id="GO:0043254">
    <property type="term" value="P:regulation of protein-containing complex assembly"/>
    <property type="evidence" value="ECO:0000266"/>
    <property type="project" value="RGD"/>
</dbReference>
<dbReference type="GO" id="GO:0050807">
    <property type="term" value="P:regulation of synapse organization"/>
    <property type="evidence" value="ECO:0000266"/>
    <property type="project" value="RGD"/>
</dbReference>
<dbReference type="GO" id="GO:0090207">
    <property type="term" value="P:regulation of triglyceride metabolic process"/>
    <property type="evidence" value="ECO:0000314"/>
    <property type="project" value="RGD"/>
</dbReference>
<dbReference type="GO" id="GO:0061771">
    <property type="term" value="P:response to caloric restriction"/>
    <property type="evidence" value="ECO:0000266"/>
    <property type="project" value="RGD"/>
</dbReference>
<dbReference type="GO" id="GO:1904421">
    <property type="term" value="P:response to D-galactosamine"/>
    <property type="evidence" value="ECO:0000270"/>
    <property type="project" value="RGD"/>
</dbReference>
<dbReference type="GO" id="GO:0002021">
    <property type="term" value="P:response to dietary excess"/>
    <property type="evidence" value="ECO:0000266"/>
    <property type="project" value="RGD"/>
</dbReference>
<dbReference type="GO" id="GO:0045471">
    <property type="term" value="P:response to ethanol"/>
    <property type="evidence" value="ECO:0000270"/>
    <property type="project" value="RGD"/>
</dbReference>
<dbReference type="GO" id="GO:0032868">
    <property type="term" value="P:response to insulin"/>
    <property type="evidence" value="ECO:0000270"/>
    <property type="project" value="RGD"/>
</dbReference>
<dbReference type="GO" id="GO:0006979">
    <property type="term" value="P:response to oxidative stress"/>
    <property type="evidence" value="ECO:0000266"/>
    <property type="project" value="RGD"/>
</dbReference>
<dbReference type="GO" id="GO:0032526">
    <property type="term" value="P:response to retinoic acid"/>
    <property type="evidence" value="ECO:0000270"/>
    <property type="project" value="RGD"/>
</dbReference>
<dbReference type="GO" id="GO:0034612">
    <property type="term" value="P:response to tumor necrosis factor"/>
    <property type="evidence" value="ECO:0000270"/>
    <property type="project" value="RGD"/>
</dbReference>
<dbReference type="GO" id="GO:0010043">
    <property type="term" value="P:response to zinc ion"/>
    <property type="evidence" value="ECO:0000270"/>
    <property type="project" value="RGD"/>
</dbReference>
<dbReference type="GO" id="GO:0043691">
    <property type="term" value="P:reverse cholesterol transport"/>
    <property type="evidence" value="ECO:0000266"/>
    <property type="project" value="RGD"/>
</dbReference>
<dbReference type="GO" id="GO:0070328">
    <property type="term" value="P:triglyceride homeostasis"/>
    <property type="evidence" value="ECO:0000266"/>
    <property type="project" value="RGD"/>
</dbReference>
<dbReference type="GO" id="GO:0006641">
    <property type="term" value="P:triglyceride metabolic process"/>
    <property type="evidence" value="ECO:0000266"/>
    <property type="project" value="RGD"/>
</dbReference>
<dbReference type="GO" id="GO:0071830">
    <property type="term" value="P:triglyceride-rich lipoprotein particle clearance"/>
    <property type="evidence" value="ECO:0000250"/>
    <property type="project" value="UniProtKB"/>
</dbReference>
<dbReference type="GO" id="GO:0042311">
    <property type="term" value="P:vasodilation"/>
    <property type="evidence" value="ECO:0000266"/>
    <property type="project" value="RGD"/>
</dbReference>
<dbReference type="GO" id="GO:0034447">
    <property type="term" value="P:very-low-density lipoprotein particle clearance"/>
    <property type="evidence" value="ECO:0000250"/>
    <property type="project" value="UniProtKB"/>
</dbReference>
<dbReference type="GO" id="GO:0034372">
    <property type="term" value="P:very-low-density lipoprotein particle remodeling"/>
    <property type="evidence" value="ECO:0000266"/>
    <property type="project" value="RGD"/>
</dbReference>
<dbReference type="GO" id="GO:0019068">
    <property type="term" value="P:virion assembly"/>
    <property type="evidence" value="ECO:0000266"/>
    <property type="project" value="RGD"/>
</dbReference>
<dbReference type="FunFam" id="1.20.120.20:FF:000002">
    <property type="entry name" value="Apolipoprotein E"/>
    <property type="match status" value="1"/>
</dbReference>
<dbReference type="FunFam" id="1.20.120.20:FF:000003">
    <property type="entry name" value="Apolipoprotein E"/>
    <property type="match status" value="1"/>
</dbReference>
<dbReference type="Gene3D" id="1.20.120.20">
    <property type="entry name" value="Apolipoprotein"/>
    <property type="match status" value="2"/>
</dbReference>
<dbReference type="InterPro" id="IPR000074">
    <property type="entry name" value="ApoA_E"/>
</dbReference>
<dbReference type="InterPro" id="IPR050163">
    <property type="entry name" value="Apolipoprotein_A1/A4/E"/>
</dbReference>
<dbReference type="PANTHER" id="PTHR18976">
    <property type="entry name" value="APOLIPOPROTEIN"/>
    <property type="match status" value="1"/>
</dbReference>
<dbReference type="PANTHER" id="PTHR18976:SF2">
    <property type="entry name" value="APOLIPOPROTEIN E"/>
    <property type="match status" value="1"/>
</dbReference>
<dbReference type="Pfam" id="PF01442">
    <property type="entry name" value="Apolipoprotein"/>
    <property type="match status" value="1"/>
</dbReference>
<dbReference type="SUPFAM" id="SSF58113">
    <property type="entry name" value="Apolipoprotein A-I"/>
    <property type="match status" value="1"/>
</dbReference>
<comment type="function">
    <text evidence="1">APOE is an apolipoprotein, a protein associating with lipid particles, that mainly functions in lipoprotein-mediated lipid transport between organs via the plasma and interstitial fluids. APOE is a core component of plasma lipoproteins and is involved in their production, conversion and clearance. Apolipoproteins are amphipathic molecules that interact both with lipids of the lipoprotein particle core and the aqueous environment of the plasma. As such, APOE associates with chylomicrons, chylomicron remnants, very low density lipoproteins (VLDL) and intermediate density lipoproteins (IDL) but shows a preferential binding to high-density lipoproteins (HDL). It also binds a wide range of cellular receptors including the LDL receptor/LDLR and the very low-density lipoprotein receptor/VLDLR that mediate the cellular uptake of the APOE-containing lipoprotein particles. Finally, APOE also has a heparin-binding activity and binds heparan-sulfate proteoglycans on the surface of cells, a property that supports the capture and the receptor-mediated uptake of APOE-containing lipoproteins by cells.</text>
</comment>
<comment type="subunit">
    <text evidence="1">Homotetramer. May interact with ABCA1; functionally associated with ABCA1 in the biogenesis of HDLs. May interact with APP/A4 amyloid-beta peptide; the interaction is extremely stable in vitro but its physiological significance is unclear. May interact with MAPT. May interact with MAP2. In the cerebrospinal fluid, interacts with secreted SORL1. Interacts with PMEL; this allows the loading of PMEL luminal fragment on ILVs to induce fibril nucleation.</text>
</comment>
<comment type="subcellular location">
    <subcellularLocation>
        <location evidence="1">Secreted</location>
    </subcellularLocation>
    <subcellularLocation>
        <location evidence="1">Secreted</location>
        <location evidence="1">Extracellular space</location>
    </subcellularLocation>
    <subcellularLocation>
        <location evidence="1">Secreted</location>
        <location evidence="1">Extracellular space</location>
        <location evidence="1">Extracellular matrix</location>
    </subcellularLocation>
    <subcellularLocation>
        <location evidence="1">Extracellular vesicle</location>
    </subcellularLocation>
    <subcellularLocation>
        <location evidence="1">Endosome</location>
        <location evidence="1">Multivesicular body</location>
    </subcellularLocation>
    <text evidence="1">In the plasma, APOE is associated with chylomicrons, chylomicrons remnants, VLDL, LDL and HDL lipoproteins. Lipid poor oligomeric APOE is associated with the extracellular matrix in a calcium- and heparan-sulfate proteoglycans-dependent manner. Lipidation induces the release from the extracellular matrix. Colocalizes with CD63 and PMEL at exosomes and in intraluminal vesicles within multivesicular endosomes.</text>
</comment>
<comment type="PTM">
    <text evidence="1">APOE exists as multiple glycosylated and sialylated glycoforms within cells and in plasma. The extent of glycosylation and sialylation are tissue and context specific.</text>
</comment>
<comment type="PTM">
    <text evidence="1">Glycated in plasma VLDL.</text>
</comment>
<comment type="PTM">
    <text evidence="1">Phosphorylated by FAM20C in the extracellular medium.</text>
</comment>
<comment type="miscellaneous">
    <text>The mature protein has no cysteine residues; however, in different allelic variants where cysteine residues replace arginine at positions 155 or 168, binding of Apo-E to cell membrane receptors is decreased. The amino end of this protein is therefore thought to interact with the receptor.</text>
</comment>
<comment type="similarity">
    <text evidence="4">Belongs to the apolipoprotein A1/A4/E family.</text>
</comment>
<gene>
    <name type="primary">Apoe</name>
</gene>
<sequence length="312" mass="35753">MKALWALLLVPLLTGCLAEGELEVTDQLPGQSDQPWEQALNRFWDYLRWVQTLSDQVQEELQSSQVTQELTVLMEDTMTEVKAYKKELEEQLGPVAEETRARLAKEVQAAQARLGADMEDLRNRLGQYRNEVNTMLGQSTEELRSRLSTHLRKMRKRLMRDADDLQKRLAVYKAGAQEGAERGVSAIRERLGPLVEQGRQRTANLGAGAAQPLRDRAQALSDRIRGRLEEVGNQARDRLEEVREQMEEVRSKMEEQTQQIRLQAEIFQARIKGWFEPLVEDMQRQWANLMEKIQASVATNSIASTTVPLENQ</sequence>
<name>APOE_RAT</name>
<proteinExistence type="evidence at protein level"/>
<protein>
    <recommendedName>
        <fullName>Apolipoprotein E</fullName>
        <shortName>Apo-E</shortName>
    </recommendedName>
</protein>
<organism>
    <name type="scientific">Rattus norvegicus</name>
    <name type="common">Rat</name>
    <dbReference type="NCBI Taxonomy" id="10116"/>
    <lineage>
        <taxon>Eukaryota</taxon>
        <taxon>Metazoa</taxon>
        <taxon>Chordata</taxon>
        <taxon>Craniata</taxon>
        <taxon>Vertebrata</taxon>
        <taxon>Euteleostomi</taxon>
        <taxon>Mammalia</taxon>
        <taxon>Eutheria</taxon>
        <taxon>Euarchontoglires</taxon>
        <taxon>Glires</taxon>
        <taxon>Rodentia</taxon>
        <taxon>Myomorpha</taxon>
        <taxon>Muroidea</taxon>
        <taxon>Muridae</taxon>
        <taxon>Murinae</taxon>
        <taxon>Rattus</taxon>
    </lineage>
</organism>
<feature type="signal peptide" evidence="3">
    <location>
        <begin position="1"/>
        <end position="18"/>
    </location>
</feature>
<feature type="chain" id="PRO_0000001996" description="Apolipoprotein E">
    <location>
        <begin position="19"/>
        <end position="312"/>
    </location>
</feature>
<feature type="repeat" description="1">
    <location>
        <begin position="72"/>
        <end position="93"/>
    </location>
</feature>
<feature type="repeat" description="2">
    <location>
        <begin position="94"/>
        <end position="115"/>
    </location>
</feature>
<feature type="repeat" description="3">
    <location>
        <begin position="116"/>
        <end position="137"/>
    </location>
</feature>
<feature type="repeat" description="4">
    <location>
        <begin position="138"/>
        <end position="159"/>
    </location>
</feature>
<feature type="repeat" description="5">
    <location>
        <begin position="160"/>
        <end position="181"/>
    </location>
</feature>
<feature type="repeat" description="6">
    <location>
        <begin position="182"/>
        <end position="203"/>
    </location>
</feature>
<feature type="repeat" description="7">
    <location>
        <begin position="204"/>
        <end position="225"/>
    </location>
</feature>
<feature type="repeat" description="8">
    <location>
        <begin position="226"/>
        <end position="247"/>
    </location>
</feature>
<feature type="region of interest" description="8 X 22 AA approximate tandem repeats">
    <location>
        <begin position="72"/>
        <end position="247"/>
    </location>
</feature>
<feature type="region of interest" description="LDL and other lipoprotein receptors binding" evidence="1">
    <location>
        <begin position="150"/>
        <end position="160"/>
    </location>
</feature>
<feature type="region of interest" description="LDL receptor binding" evidence="1">
    <location>
        <begin position="150"/>
        <end position="160"/>
    </location>
</feature>
<feature type="region of interest" description="Lipid-binding and lipoprotein association" evidence="1">
    <location>
        <begin position="202"/>
        <end position="282"/>
    </location>
</feature>
<feature type="region of interest" description="Homooligomerization" evidence="1">
    <location>
        <begin position="258"/>
        <end position="312"/>
    </location>
</feature>
<feature type="region of interest" description="Specificity for association with VLDL" evidence="1">
    <location>
        <begin position="270"/>
        <end position="282"/>
    </location>
</feature>
<feature type="binding site" evidence="1">
    <location>
        <begin position="154"/>
        <end position="157"/>
    </location>
    <ligand>
        <name>heparin</name>
        <dbReference type="ChEBI" id="CHEBI:28304"/>
    </ligand>
</feature>
<feature type="binding site" evidence="1">
    <location>
        <begin position="221"/>
        <end position="228"/>
    </location>
    <ligand>
        <name>heparin</name>
        <dbReference type="ChEBI" id="CHEBI:28304"/>
    </ligand>
</feature>
<feature type="modified residue" description="Methionine sulfoxide" evidence="2">
    <location>
        <position position="135"/>
    </location>
</feature>
<feature type="modified residue" description="Phosphoserine" evidence="5">
    <location>
        <position position="139"/>
    </location>
</feature>
<feature type="sequence conflict" description="In Ref. 1; CAA28650." evidence="4" ref="1">
    <original>A</original>
    <variation>T</variation>
    <location>
        <position position="104"/>
    </location>
</feature>
<feature type="sequence conflict" description="In Ref. 3; no nucleotide entry and 4; AAC60703." evidence="4" ref="3 4">
    <original>A</original>
    <variation>T</variation>
    <location>
        <position position="110"/>
    </location>
</feature>
<feature type="sequence conflict" description="In Ref. 3; no nucleotide entry and 4; AAC60703." evidence="4" ref="3 4">
    <original>E</original>
    <variation>D</variation>
    <location>
        <position position="141"/>
    </location>
</feature>
<feature type="sequence conflict" description="In Ref. 1; CAA28650 and 3; no nucleotide entry." evidence="4" ref="1 3">
    <original>GAGAAQPL</original>
    <variation>RWRRPAP</variation>
    <location>
        <begin position="206"/>
        <end position="213"/>
    </location>
</feature>
<feature type="sequence conflict" description="In Ref. 3; no nucleotide entry and 4; AAC60703." evidence="4" ref="3 4">
    <original>LE</original>
    <variation>WR</variation>
    <location>
        <begin position="309"/>
        <end position="310"/>
    </location>
</feature>
<accession>P02650</accession>
<keyword id="KW-0162">Chylomicron</keyword>
<keyword id="KW-0903">Direct protein sequencing</keyword>
<keyword id="KW-0967">Endosome</keyword>
<keyword id="KW-0272">Extracellular matrix</keyword>
<keyword id="KW-0325">Glycoprotein</keyword>
<keyword id="KW-0345">HDL</keyword>
<keyword id="KW-0358">Heparin-binding</keyword>
<keyword id="KW-0445">Lipid transport</keyword>
<keyword id="KW-0446">Lipid-binding</keyword>
<keyword id="KW-0558">Oxidation</keyword>
<keyword id="KW-0597">Phosphoprotein</keyword>
<keyword id="KW-1185">Reference proteome</keyword>
<keyword id="KW-0677">Repeat</keyword>
<keyword id="KW-0964">Secreted</keyword>
<keyword id="KW-0732">Signal</keyword>
<keyword id="KW-0813">Transport</keyword>
<keyword id="KW-0850">VLDL</keyword>
<reference key="1">
    <citation type="journal article" date="1986" name="Nucleic Acids Res.">
        <title>Complete nucleotide sequence of the gene encoding the rat apolipoprotein E.</title>
        <authorList>
            <person name="Fukazawa C."/>
            <person name="Matsumoto A."/>
            <person name="Taylor L.M."/>
        </authorList>
    </citation>
    <scope>NUCLEOTIDE SEQUENCE [GENOMIC DNA]</scope>
</reference>
<reference key="2">
    <citation type="journal article" date="1986" name="J. Biol. Chem.">
        <title>Structure and expression of the rat apolipoprotein E gene.</title>
        <authorList>
            <person name="Fung W.-P."/>
            <person name="Howlett G.J."/>
            <person name="Schreiber G."/>
        </authorList>
    </citation>
    <scope>NUCLEOTIDE SEQUENCE [GENOMIC DNA]</scope>
</reference>
<reference key="3">
    <citation type="journal article" date="1983" name="J. Biol. Chem.">
        <title>Rat apolipoprotein E mRNA. Cloning and sequencing of double-stranded cDNA.</title>
        <authorList>
            <person name="McLean J.W."/>
            <person name="Fukazawa C."/>
            <person name="Taylor J.M."/>
        </authorList>
    </citation>
    <scope>NUCLEOTIDE SEQUENCE [MRNA]</scope>
</reference>
<reference key="4">
    <citation type="journal article" date="1995" name="Appl. Microbiol. Biotechnol.">
        <title>Secretion by Saccharomyces cerevisiae of rat apolipoprotein E as a fusion to Mucor rennin.</title>
        <authorList>
            <person name="Nomura N."/>
            <person name="Yamada H."/>
            <person name="Matsubara N."/>
            <person name="Horinouchi S."/>
            <person name="Beppu T."/>
        </authorList>
    </citation>
    <scope>NUCLEOTIDE SEQUENCE [GENOMIC DNA]</scope>
    <source>
        <tissue>Liver</tissue>
    </source>
</reference>
<reference key="5">
    <citation type="journal article" date="2004" name="Genome Res.">
        <title>The status, quality, and expansion of the NIH full-length cDNA project: the Mammalian Gene Collection (MGC).</title>
        <authorList>
            <consortium name="The MGC Project Team"/>
        </authorList>
    </citation>
    <scope>NUCLEOTIDE SEQUENCE [LARGE SCALE MRNA]</scope>
    <source>
        <tissue>Ovary</tissue>
    </source>
</reference>
<reference key="6">
    <citation type="submission" date="2007-04" db="UniProtKB">
        <authorList>
            <person name="Lubec G."/>
            <person name="Chen W.-Q."/>
        </authorList>
    </citation>
    <scope>PROTEIN SEQUENCE OF 87-100; 114-122; 130-144; 191-199; 202-216; 226-236 AND 262-270</scope>
    <scope>IDENTIFICATION BY MASS SPECTROMETRY</scope>
    <source>
        <strain>Sprague-Dawley</strain>
        <tissue>Hippocampus</tissue>
    </source>
</reference>
<reference key="7">
    <citation type="journal article" date="2012" name="Nat. Commun.">
        <title>Quantitative maps of protein phosphorylation sites across 14 different rat organs and tissues.</title>
        <authorList>
            <person name="Lundby A."/>
            <person name="Secher A."/>
            <person name="Lage K."/>
            <person name="Nordsborg N.B."/>
            <person name="Dmytriyev A."/>
            <person name="Lundby C."/>
            <person name="Olsen J.V."/>
        </authorList>
    </citation>
    <scope>PHOSPHORYLATION [LARGE SCALE ANALYSIS] AT SER-139</scope>
    <scope>IDENTIFICATION BY MASS SPECTROMETRY [LARGE SCALE ANALYSIS]</scope>
</reference>